<protein>
    <recommendedName>
        <fullName evidence="1">Lipoprotein signal peptidase</fullName>
        <ecNumber evidence="1">3.4.23.36</ecNumber>
    </recommendedName>
    <alternativeName>
        <fullName evidence="1">Prolipoprotein signal peptidase</fullName>
    </alternativeName>
    <alternativeName>
        <fullName evidence="1">Signal peptidase II</fullName>
        <shortName evidence="1">SPase II</shortName>
    </alternativeName>
</protein>
<organism>
    <name type="scientific">Nostoc sp. (strain PCC 7120 / SAG 25.82 / UTEX 2576)</name>
    <dbReference type="NCBI Taxonomy" id="103690"/>
    <lineage>
        <taxon>Bacteria</taxon>
        <taxon>Bacillati</taxon>
        <taxon>Cyanobacteriota</taxon>
        <taxon>Cyanophyceae</taxon>
        <taxon>Nostocales</taxon>
        <taxon>Nostocaceae</taxon>
        <taxon>Nostoc</taxon>
    </lineage>
</organism>
<evidence type="ECO:0000255" key="1">
    <source>
        <dbReference type="HAMAP-Rule" id="MF_00161"/>
    </source>
</evidence>
<dbReference type="EC" id="3.4.23.36" evidence="1"/>
<dbReference type="EMBL" id="BA000019">
    <property type="protein sequence ID" value="BAB76276.1"/>
    <property type="molecule type" value="Genomic_DNA"/>
</dbReference>
<dbReference type="PIR" id="AI2377">
    <property type="entry name" value="AI2377"/>
</dbReference>
<dbReference type="RefSeq" id="WP_010998709.1">
    <property type="nucleotide sequence ID" value="NZ_RSCN01000007.1"/>
</dbReference>
<dbReference type="SMR" id="Q8YNI8"/>
<dbReference type="STRING" id="103690.gene:10496627"/>
<dbReference type="KEGG" id="ana:alr4577"/>
<dbReference type="eggNOG" id="COG0597">
    <property type="taxonomic scope" value="Bacteria"/>
</dbReference>
<dbReference type="OrthoDB" id="9810259at2"/>
<dbReference type="UniPathway" id="UPA00665"/>
<dbReference type="Proteomes" id="UP000002483">
    <property type="component" value="Chromosome"/>
</dbReference>
<dbReference type="GO" id="GO:0005886">
    <property type="term" value="C:plasma membrane"/>
    <property type="evidence" value="ECO:0007669"/>
    <property type="project" value="UniProtKB-SubCell"/>
</dbReference>
<dbReference type="GO" id="GO:0004190">
    <property type="term" value="F:aspartic-type endopeptidase activity"/>
    <property type="evidence" value="ECO:0007669"/>
    <property type="project" value="UniProtKB-UniRule"/>
</dbReference>
<dbReference type="GO" id="GO:0006508">
    <property type="term" value="P:proteolysis"/>
    <property type="evidence" value="ECO:0007669"/>
    <property type="project" value="UniProtKB-KW"/>
</dbReference>
<dbReference type="HAMAP" id="MF_00161">
    <property type="entry name" value="LspA"/>
    <property type="match status" value="1"/>
</dbReference>
<dbReference type="InterPro" id="IPR001872">
    <property type="entry name" value="Peptidase_A8"/>
</dbReference>
<dbReference type="NCBIfam" id="TIGR00077">
    <property type="entry name" value="lspA"/>
    <property type="match status" value="1"/>
</dbReference>
<dbReference type="PANTHER" id="PTHR33695">
    <property type="entry name" value="LIPOPROTEIN SIGNAL PEPTIDASE"/>
    <property type="match status" value="1"/>
</dbReference>
<dbReference type="PANTHER" id="PTHR33695:SF1">
    <property type="entry name" value="LIPOPROTEIN SIGNAL PEPTIDASE"/>
    <property type="match status" value="1"/>
</dbReference>
<dbReference type="Pfam" id="PF01252">
    <property type="entry name" value="Peptidase_A8"/>
    <property type="match status" value="1"/>
</dbReference>
<dbReference type="PRINTS" id="PR00781">
    <property type="entry name" value="LIPOSIGPTASE"/>
</dbReference>
<dbReference type="PROSITE" id="PS00855">
    <property type="entry name" value="SPASE_II"/>
    <property type="match status" value="1"/>
</dbReference>
<feature type="chain" id="PRO_1000038777" description="Lipoprotein signal peptidase">
    <location>
        <begin position="1"/>
        <end position="158"/>
    </location>
</feature>
<feature type="transmembrane region" description="Helical" evidence="1">
    <location>
        <begin position="7"/>
        <end position="27"/>
    </location>
</feature>
<feature type="transmembrane region" description="Helical" evidence="1">
    <location>
        <begin position="38"/>
        <end position="58"/>
    </location>
</feature>
<feature type="transmembrane region" description="Helical" evidence="1">
    <location>
        <begin position="67"/>
        <end position="87"/>
    </location>
</feature>
<feature type="transmembrane region" description="Helical" evidence="1">
    <location>
        <begin position="95"/>
        <end position="115"/>
    </location>
</feature>
<feature type="transmembrane region" description="Helical" evidence="1">
    <location>
        <begin position="125"/>
        <end position="145"/>
    </location>
</feature>
<feature type="active site" evidence="1">
    <location>
        <position position="116"/>
    </location>
</feature>
<feature type="active site" evidence="1">
    <location>
        <position position="132"/>
    </location>
</feature>
<reference key="1">
    <citation type="journal article" date="2001" name="DNA Res.">
        <title>Complete genomic sequence of the filamentous nitrogen-fixing cyanobacterium Anabaena sp. strain PCC 7120.</title>
        <authorList>
            <person name="Kaneko T."/>
            <person name="Nakamura Y."/>
            <person name="Wolk C.P."/>
            <person name="Kuritz T."/>
            <person name="Sasamoto S."/>
            <person name="Watanabe A."/>
            <person name="Iriguchi M."/>
            <person name="Ishikawa A."/>
            <person name="Kawashima K."/>
            <person name="Kimura T."/>
            <person name="Kishida Y."/>
            <person name="Kohara M."/>
            <person name="Matsumoto M."/>
            <person name="Matsuno A."/>
            <person name="Muraki A."/>
            <person name="Nakazaki N."/>
            <person name="Shimpo S."/>
            <person name="Sugimoto M."/>
            <person name="Takazawa M."/>
            <person name="Yamada M."/>
            <person name="Yasuda M."/>
            <person name="Tabata S."/>
        </authorList>
    </citation>
    <scope>NUCLEOTIDE SEQUENCE [LARGE SCALE GENOMIC DNA]</scope>
    <source>
        <strain>PCC 7120 / SAG 25.82 / UTEX 2576</strain>
    </source>
</reference>
<comment type="function">
    <text evidence="1">This protein specifically catalyzes the removal of signal peptides from prolipoproteins.</text>
</comment>
<comment type="catalytic activity">
    <reaction evidence="1">
        <text>Release of signal peptides from bacterial membrane prolipoproteins. Hydrolyzes -Xaa-Yaa-Zaa-|-(S,diacylglyceryl)Cys-, in which Xaa is hydrophobic (preferably Leu), and Yaa (Ala or Ser) and Zaa (Gly or Ala) have small, neutral side chains.</text>
        <dbReference type="EC" id="3.4.23.36"/>
    </reaction>
</comment>
<comment type="pathway">
    <text evidence="1">Protein modification; lipoprotein biosynthesis (signal peptide cleavage).</text>
</comment>
<comment type="subcellular location">
    <subcellularLocation>
        <location evidence="1">Cell inner membrane</location>
        <topology evidence="1">Multi-pass membrane protein</topology>
    </subcellularLocation>
</comment>
<comment type="similarity">
    <text evidence="1">Belongs to the peptidase A8 family.</text>
</comment>
<accession>Q8YNI8</accession>
<name>LSPA_NOSS1</name>
<gene>
    <name evidence="1" type="primary">lspA</name>
    <name type="ordered locus">alr4577</name>
</gene>
<proteinExistence type="inferred from homology"/>
<keyword id="KW-0064">Aspartyl protease</keyword>
<keyword id="KW-0997">Cell inner membrane</keyword>
<keyword id="KW-1003">Cell membrane</keyword>
<keyword id="KW-0378">Hydrolase</keyword>
<keyword id="KW-0472">Membrane</keyword>
<keyword id="KW-0645">Protease</keyword>
<keyword id="KW-1185">Reference proteome</keyword>
<keyword id="KW-0812">Transmembrane</keyword>
<keyword id="KW-1133">Transmembrane helix</keyword>
<sequence length="158" mass="17749">MRFKNRLFWIAAFIAFFVDQLTKYWVVQTFSLGETLPILPGIFHFTYVTNTGAAFSLFSGKVEWLRWLSLGVSLLLIGLALLGPVLDRWDQLGYGLILGGAMGNGIDRFALGYVVDFLDFRLINFAVFNMADSFISIGIVCLLLASLQKPPSSHHRPR</sequence>